<evidence type="ECO:0000255" key="1">
    <source>
        <dbReference type="HAMAP-Rule" id="MF_00256"/>
    </source>
</evidence>
<evidence type="ECO:0000256" key="2">
    <source>
        <dbReference type="SAM" id="MobiDB-lite"/>
    </source>
</evidence>
<evidence type="ECO:0000305" key="3"/>
<organism>
    <name type="scientific">Saccharolobus islandicus (strain M.16.4 / Kamchatka #3)</name>
    <name type="common">Sulfolobus islandicus</name>
    <dbReference type="NCBI Taxonomy" id="426118"/>
    <lineage>
        <taxon>Archaea</taxon>
        <taxon>Thermoproteota</taxon>
        <taxon>Thermoprotei</taxon>
        <taxon>Sulfolobales</taxon>
        <taxon>Sulfolobaceae</taxon>
        <taxon>Saccharolobus</taxon>
    </lineage>
</organism>
<dbReference type="EMBL" id="CP001402">
    <property type="protein sequence ID" value="ACR41999.1"/>
    <property type="molecule type" value="Genomic_DNA"/>
</dbReference>
<dbReference type="RefSeq" id="WP_012711397.1">
    <property type="nucleotide sequence ID" value="NC_012726.1"/>
</dbReference>
<dbReference type="SMR" id="C4KHD5"/>
<dbReference type="KEGG" id="sid:M164_1393"/>
<dbReference type="HOGENOM" id="CLU_080796_1_0_2"/>
<dbReference type="Proteomes" id="UP000001479">
    <property type="component" value="Chromosome"/>
</dbReference>
<dbReference type="GO" id="GO:0022625">
    <property type="term" value="C:cytosolic large ribosomal subunit"/>
    <property type="evidence" value="ECO:0007669"/>
    <property type="project" value="TreeGrafter"/>
</dbReference>
<dbReference type="GO" id="GO:0003723">
    <property type="term" value="F:RNA binding"/>
    <property type="evidence" value="ECO:0007669"/>
    <property type="project" value="TreeGrafter"/>
</dbReference>
<dbReference type="GO" id="GO:0003735">
    <property type="term" value="F:structural constituent of ribosome"/>
    <property type="evidence" value="ECO:0007669"/>
    <property type="project" value="InterPro"/>
</dbReference>
<dbReference type="GO" id="GO:0002181">
    <property type="term" value="P:cytoplasmic translation"/>
    <property type="evidence" value="ECO:0007669"/>
    <property type="project" value="TreeGrafter"/>
</dbReference>
<dbReference type="FunFam" id="3.40.1120.10:FF:000002">
    <property type="entry name" value="50S ribosomal protein L15e"/>
    <property type="match status" value="1"/>
</dbReference>
<dbReference type="Gene3D" id="3.40.1120.10">
    <property type="entry name" value="Ribosomal protein l15e"/>
    <property type="match status" value="1"/>
</dbReference>
<dbReference type="HAMAP" id="MF_00256">
    <property type="entry name" value="Ribosomal_eL15"/>
    <property type="match status" value="1"/>
</dbReference>
<dbReference type="InterPro" id="IPR024794">
    <property type="entry name" value="Rbsml_eL15_core_dom_sf"/>
</dbReference>
<dbReference type="InterPro" id="IPR000439">
    <property type="entry name" value="Ribosomal_eL15"/>
</dbReference>
<dbReference type="InterPro" id="IPR020926">
    <property type="entry name" value="Ribosomal_eL15_arc"/>
</dbReference>
<dbReference type="InterPro" id="IPR020925">
    <property type="entry name" value="Ribosomal_eL15_CS"/>
</dbReference>
<dbReference type="InterPro" id="IPR012678">
    <property type="entry name" value="Ribosomal_uL23/eL15/eS24_sf"/>
</dbReference>
<dbReference type="NCBIfam" id="NF003269">
    <property type="entry name" value="PRK04243.1"/>
    <property type="match status" value="1"/>
</dbReference>
<dbReference type="PANTHER" id="PTHR11847:SF4">
    <property type="entry name" value="LARGE RIBOSOMAL SUBUNIT PROTEIN EL15"/>
    <property type="match status" value="1"/>
</dbReference>
<dbReference type="PANTHER" id="PTHR11847">
    <property type="entry name" value="RIBOSOMAL PROTEIN L15"/>
    <property type="match status" value="1"/>
</dbReference>
<dbReference type="Pfam" id="PF00827">
    <property type="entry name" value="Ribosomal_L15e"/>
    <property type="match status" value="1"/>
</dbReference>
<dbReference type="SMART" id="SM01384">
    <property type="entry name" value="Ribosomal_L15e"/>
    <property type="match status" value="1"/>
</dbReference>
<dbReference type="SUPFAM" id="SSF54189">
    <property type="entry name" value="Ribosomal proteins S24e, L23 and L15e"/>
    <property type="match status" value="1"/>
</dbReference>
<dbReference type="PROSITE" id="PS01194">
    <property type="entry name" value="RIBOSOMAL_L15E"/>
    <property type="match status" value="1"/>
</dbReference>
<keyword id="KW-0687">Ribonucleoprotein</keyword>
<keyword id="KW-0689">Ribosomal protein</keyword>
<gene>
    <name evidence="1" type="primary">rpl15e</name>
    <name type="ordered locus">M164_1393</name>
</gene>
<protein>
    <recommendedName>
        <fullName evidence="1">Large ribosomal subunit protein eL15</fullName>
    </recommendedName>
    <alternativeName>
        <fullName evidence="3">50S ribosomal protein L15e</fullName>
    </alternativeName>
</protein>
<sequence>MTLSVYHYIENTWNSEEWKKGVLRQRFIEWRKEPSIVRLAKPTRLNRARSLGYKAKQGFVIVRVRVRRGGLNKPRPNKGRRPKRMGVYGYGPAKGYKWIAEERAARKYPNLEVLGSYYVGEDGLYKYYEIIMVDPSHPVIKNDPNYKWLQDPSNRNRVFRGLTSAGKKARGLRKSKGFKGTVKHKWSRKQKEREEKKRHEASKYYRLQRYDKIPGK</sequence>
<accession>C4KHD5</accession>
<name>RL15E_SACI6</name>
<feature type="chain" id="PRO_1000204615" description="Large ribosomal subunit protein eL15">
    <location>
        <begin position="1"/>
        <end position="216"/>
    </location>
</feature>
<feature type="region of interest" description="Disordered" evidence="2">
    <location>
        <begin position="170"/>
        <end position="201"/>
    </location>
</feature>
<feature type="compositionally biased region" description="Basic residues" evidence="2">
    <location>
        <begin position="170"/>
        <end position="188"/>
    </location>
</feature>
<feature type="compositionally biased region" description="Basic and acidic residues" evidence="2">
    <location>
        <begin position="189"/>
        <end position="201"/>
    </location>
</feature>
<proteinExistence type="inferred from homology"/>
<comment type="similarity">
    <text evidence="1">Belongs to the eukaryotic ribosomal protein eL15 family.</text>
</comment>
<reference key="1">
    <citation type="journal article" date="2009" name="Proc. Natl. Acad. Sci. U.S.A.">
        <title>Biogeography of the Sulfolobus islandicus pan-genome.</title>
        <authorList>
            <person name="Reno M.L."/>
            <person name="Held N.L."/>
            <person name="Fields C.J."/>
            <person name="Burke P.V."/>
            <person name="Whitaker R.J."/>
        </authorList>
    </citation>
    <scope>NUCLEOTIDE SEQUENCE [LARGE SCALE GENOMIC DNA]</scope>
    <source>
        <strain>M.16.4 / Kamchatka #3</strain>
    </source>
</reference>